<evidence type="ECO:0000255" key="1">
    <source>
        <dbReference type="HAMAP-Rule" id="MF_00277"/>
    </source>
</evidence>
<evidence type="ECO:0000255" key="2">
    <source>
        <dbReference type="PROSITE-ProRule" id="PRU01175"/>
    </source>
</evidence>
<keyword id="KW-0378">Hydrolase</keyword>
<keyword id="KW-0460">Magnesium</keyword>
<keyword id="KW-0511">Multifunctional enzyme</keyword>
<keyword id="KW-0548">Nucleotidyltransferase</keyword>
<keyword id="KW-0677">Repeat</keyword>
<keyword id="KW-0808">Transferase</keyword>
<dbReference type="EC" id="2.7.7.59" evidence="1"/>
<dbReference type="EC" id="3.1.4.-" evidence="1"/>
<dbReference type="EMBL" id="CP000546">
    <property type="protein sequence ID" value="ABN00892.1"/>
    <property type="molecule type" value="Genomic_DNA"/>
</dbReference>
<dbReference type="RefSeq" id="WP_004193976.1">
    <property type="nucleotide sequence ID" value="NC_008836.1"/>
</dbReference>
<dbReference type="SMR" id="A2SB69"/>
<dbReference type="KEGG" id="bml:BMA10229_A3252"/>
<dbReference type="HOGENOM" id="CLU_012833_0_0_4"/>
<dbReference type="Proteomes" id="UP000002283">
    <property type="component" value="Chromosome I"/>
</dbReference>
<dbReference type="GO" id="GO:0008773">
    <property type="term" value="F:[protein-PII] uridylyltransferase activity"/>
    <property type="evidence" value="ECO:0007669"/>
    <property type="project" value="UniProtKB-UniRule"/>
</dbReference>
<dbReference type="GO" id="GO:0008081">
    <property type="term" value="F:phosphoric diester hydrolase activity"/>
    <property type="evidence" value="ECO:0007669"/>
    <property type="project" value="UniProtKB-UniRule"/>
</dbReference>
<dbReference type="GO" id="GO:0006808">
    <property type="term" value="P:regulation of nitrogen utilization"/>
    <property type="evidence" value="ECO:0007669"/>
    <property type="project" value="UniProtKB-UniRule"/>
</dbReference>
<dbReference type="CDD" id="cd04899">
    <property type="entry name" value="ACT_ACR-UUR-like_2"/>
    <property type="match status" value="1"/>
</dbReference>
<dbReference type="CDD" id="cd04900">
    <property type="entry name" value="ACT_UUR-like_1"/>
    <property type="match status" value="1"/>
</dbReference>
<dbReference type="CDD" id="cd00077">
    <property type="entry name" value="HDc"/>
    <property type="match status" value="1"/>
</dbReference>
<dbReference type="CDD" id="cd05401">
    <property type="entry name" value="NT_GlnE_GlnD_like"/>
    <property type="match status" value="1"/>
</dbReference>
<dbReference type="Gene3D" id="3.30.70.260">
    <property type="match status" value="1"/>
</dbReference>
<dbReference type="Gene3D" id="3.30.460.10">
    <property type="entry name" value="Beta Polymerase, domain 2"/>
    <property type="match status" value="1"/>
</dbReference>
<dbReference type="Gene3D" id="1.10.3210.10">
    <property type="entry name" value="Hypothetical protein af1432"/>
    <property type="match status" value="1"/>
</dbReference>
<dbReference type="Gene3D" id="1.20.120.330">
    <property type="entry name" value="Nucleotidyltransferases domain 2"/>
    <property type="match status" value="1"/>
</dbReference>
<dbReference type="HAMAP" id="MF_00277">
    <property type="entry name" value="PII_uridylyl_transf"/>
    <property type="match status" value="1"/>
</dbReference>
<dbReference type="InterPro" id="IPR045865">
    <property type="entry name" value="ACT-like_dom_sf"/>
</dbReference>
<dbReference type="InterPro" id="IPR002912">
    <property type="entry name" value="ACT_dom"/>
</dbReference>
<dbReference type="InterPro" id="IPR003607">
    <property type="entry name" value="HD/PDEase_dom"/>
</dbReference>
<dbReference type="InterPro" id="IPR006674">
    <property type="entry name" value="HD_domain"/>
</dbReference>
<dbReference type="InterPro" id="IPR043519">
    <property type="entry name" value="NT_sf"/>
</dbReference>
<dbReference type="InterPro" id="IPR013546">
    <property type="entry name" value="PII_UdlTrfase/GS_AdlTrfase"/>
</dbReference>
<dbReference type="InterPro" id="IPR002934">
    <property type="entry name" value="Polymerase_NTP_transf_dom"/>
</dbReference>
<dbReference type="InterPro" id="IPR010043">
    <property type="entry name" value="UTase/UR"/>
</dbReference>
<dbReference type="NCBIfam" id="NF002837">
    <property type="entry name" value="PRK03059.1"/>
    <property type="match status" value="1"/>
</dbReference>
<dbReference type="NCBIfam" id="TIGR01693">
    <property type="entry name" value="UTase_glnD"/>
    <property type="match status" value="1"/>
</dbReference>
<dbReference type="PANTHER" id="PTHR47320">
    <property type="entry name" value="BIFUNCTIONAL URIDYLYLTRANSFERASE/URIDYLYL-REMOVING ENZYME"/>
    <property type="match status" value="1"/>
</dbReference>
<dbReference type="PANTHER" id="PTHR47320:SF1">
    <property type="entry name" value="BIFUNCTIONAL URIDYLYLTRANSFERASE_URIDYLYL-REMOVING ENZYME"/>
    <property type="match status" value="1"/>
</dbReference>
<dbReference type="Pfam" id="PF08335">
    <property type="entry name" value="GlnD_UR_UTase"/>
    <property type="match status" value="1"/>
</dbReference>
<dbReference type="Pfam" id="PF01966">
    <property type="entry name" value="HD"/>
    <property type="match status" value="1"/>
</dbReference>
<dbReference type="Pfam" id="PF01909">
    <property type="entry name" value="NTP_transf_2"/>
    <property type="match status" value="1"/>
</dbReference>
<dbReference type="PIRSF" id="PIRSF006288">
    <property type="entry name" value="PII_uridyltransf"/>
    <property type="match status" value="1"/>
</dbReference>
<dbReference type="SMART" id="SM00471">
    <property type="entry name" value="HDc"/>
    <property type="match status" value="1"/>
</dbReference>
<dbReference type="SUPFAM" id="SSF55021">
    <property type="entry name" value="ACT-like"/>
    <property type="match status" value="2"/>
</dbReference>
<dbReference type="SUPFAM" id="SSF109604">
    <property type="entry name" value="HD-domain/PDEase-like"/>
    <property type="match status" value="1"/>
</dbReference>
<dbReference type="SUPFAM" id="SSF81301">
    <property type="entry name" value="Nucleotidyltransferase"/>
    <property type="match status" value="1"/>
</dbReference>
<dbReference type="SUPFAM" id="SSF81593">
    <property type="entry name" value="Nucleotidyltransferase substrate binding subunit/domain"/>
    <property type="match status" value="1"/>
</dbReference>
<dbReference type="PROSITE" id="PS51671">
    <property type="entry name" value="ACT"/>
    <property type="match status" value="2"/>
</dbReference>
<dbReference type="PROSITE" id="PS51831">
    <property type="entry name" value="HD"/>
    <property type="match status" value="1"/>
</dbReference>
<accession>A2SB69</accession>
<organism>
    <name type="scientific">Burkholderia mallei (strain NCTC 10229)</name>
    <dbReference type="NCBI Taxonomy" id="412022"/>
    <lineage>
        <taxon>Bacteria</taxon>
        <taxon>Pseudomonadati</taxon>
        <taxon>Pseudomonadota</taxon>
        <taxon>Betaproteobacteria</taxon>
        <taxon>Burkholderiales</taxon>
        <taxon>Burkholderiaceae</taxon>
        <taxon>Burkholderia</taxon>
        <taxon>pseudomallei group</taxon>
    </lineage>
</organism>
<proteinExistence type="inferred from homology"/>
<protein>
    <recommendedName>
        <fullName evidence="1">Bifunctional uridylyltransferase/uridylyl-removing enzyme</fullName>
        <shortName evidence="1">UTase/UR</shortName>
    </recommendedName>
    <alternativeName>
        <fullName evidence="1">Bifunctional [protein-PII] modification enzyme</fullName>
    </alternativeName>
    <alternativeName>
        <fullName evidence="1">Bifunctional nitrogen sensor protein</fullName>
    </alternativeName>
    <domain>
        <recommendedName>
            <fullName evidence="1">[Protein-PII] uridylyltransferase</fullName>
            <shortName evidence="1">PII uridylyltransferase</shortName>
            <shortName evidence="1">UTase</shortName>
            <ecNumber evidence="1">2.7.7.59</ecNumber>
        </recommendedName>
    </domain>
    <domain>
        <recommendedName>
            <fullName evidence="1">[Protein-PII]-UMP uridylyl-removing enzyme</fullName>
            <shortName evidence="1">UR</shortName>
            <ecNumber evidence="1">3.1.4.-</ecNumber>
        </recommendedName>
    </domain>
</protein>
<sequence length="858" mass="96750">MSASVAEPPPALSRKAEFKAAKAELLARFKSANHVTPLMHALSRATDDALRSLWQECGLPATLALVAVGGFGRGELSPHSDVDILVLLPDAHASELDERIERFIGMAWDLGLEIGSSVRTVDQCIEEASHDVTVQTSLLEARRIVGSTALFERFMLRYREALDARAFFQAKVLEMRQRHAKFQDTPYSLEPNVKESPGGLRDLQTILWIARAAGFGSSWRELDTRGLITDREARELRRNEGFLKTLRARLHVIAGRRQDILVFDLQTQAAESFGYQPTSAKRASEQLMRRYYWAAKAVTQLATILIQNIEAQLFPATSGVTRVLSPGRFVEKQGMLEIAADDVFERHPDAILEAFLLYEATRGVKGLSARTLRALYNSRDVMNNAWRRDPRNRHTFMQILQQPEGITHAFRLMNQTSVLGRYLLNFRRIVGQMQHDLYHVYTVDQHILMVLRNIRRFAVAEHAHEYPFCSQLIVNFERPWVLYVAALFHDIAKGRGGDHSALGMADARRFCREHGIEGDDAALVVWLVQHHLTMSQVAQKQDTSDPVVIKRFAELVGSERRLTALYLLTVADIRGTSPKVWNTWKGKLLEDLYRATLAVLGGAQPDAHSELKTRQEEALALLRLETVPPDAHRALWDQLDVGYFLRHDAADIAWQTRVLYRHVAADTAIVRARPSPVGDALQVLVYVKDRSDLFAGICAYFDRNGLSVLDARVNTTRHGYALDNFIVTQTEHDVQYRDIANLVEQQLAARLAESAPLPEPSKGRLSRLSRTFPITPRVDLRADERGQYYILSVSANDRPGLLYSIARVLAEHRVGVHAARINTLGERVEDVFMLDGTGLSDNRLQIQVETELLRAIAV</sequence>
<feature type="chain" id="PRO_1000022332" description="Bifunctional uridylyltransferase/uridylyl-removing enzyme">
    <location>
        <begin position="1"/>
        <end position="858"/>
    </location>
</feature>
<feature type="domain" description="HD" evidence="2">
    <location>
        <begin position="443"/>
        <end position="565"/>
    </location>
</feature>
<feature type="domain" description="ACT 1" evidence="1">
    <location>
        <begin position="682"/>
        <end position="761"/>
    </location>
</feature>
<feature type="domain" description="ACT 2" evidence="1">
    <location>
        <begin position="790"/>
        <end position="858"/>
    </location>
</feature>
<feature type="region of interest" description="Uridylyltransferase">
    <location>
        <begin position="1"/>
        <end position="324"/>
    </location>
</feature>
<feature type="region of interest" description="Uridylyl-removing">
    <location>
        <begin position="325"/>
        <end position="681"/>
    </location>
</feature>
<comment type="function">
    <text evidence="1">Modifies, by uridylylation and deuridylylation, the PII regulatory proteins (GlnB and homologs), in response to the nitrogen status of the cell that GlnD senses through the glutamine level. Under low glutamine levels, catalyzes the conversion of the PII proteins and UTP to PII-UMP and PPi, while under higher glutamine levels, GlnD hydrolyzes PII-UMP to PII and UMP (deuridylylation). Thus, controls uridylylation state and activity of the PII proteins, and plays an important role in the regulation of nitrogen assimilation and metabolism.</text>
</comment>
<comment type="catalytic activity">
    <reaction evidence="1">
        <text>[protein-PII]-L-tyrosine + UTP = [protein-PII]-uridylyl-L-tyrosine + diphosphate</text>
        <dbReference type="Rhea" id="RHEA:13673"/>
        <dbReference type="Rhea" id="RHEA-COMP:12147"/>
        <dbReference type="Rhea" id="RHEA-COMP:12148"/>
        <dbReference type="ChEBI" id="CHEBI:33019"/>
        <dbReference type="ChEBI" id="CHEBI:46398"/>
        <dbReference type="ChEBI" id="CHEBI:46858"/>
        <dbReference type="ChEBI" id="CHEBI:90602"/>
        <dbReference type="EC" id="2.7.7.59"/>
    </reaction>
</comment>
<comment type="catalytic activity">
    <reaction evidence="1">
        <text>[protein-PII]-uridylyl-L-tyrosine + H2O = [protein-PII]-L-tyrosine + UMP + H(+)</text>
        <dbReference type="Rhea" id="RHEA:48600"/>
        <dbReference type="Rhea" id="RHEA-COMP:12147"/>
        <dbReference type="Rhea" id="RHEA-COMP:12148"/>
        <dbReference type="ChEBI" id="CHEBI:15377"/>
        <dbReference type="ChEBI" id="CHEBI:15378"/>
        <dbReference type="ChEBI" id="CHEBI:46858"/>
        <dbReference type="ChEBI" id="CHEBI:57865"/>
        <dbReference type="ChEBI" id="CHEBI:90602"/>
    </reaction>
</comment>
<comment type="cofactor">
    <cofactor evidence="1">
        <name>Mg(2+)</name>
        <dbReference type="ChEBI" id="CHEBI:18420"/>
    </cofactor>
</comment>
<comment type="activity regulation">
    <text evidence="1">Uridylyltransferase (UTase) activity is inhibited by glutamine, while glutamine activates uridylyl-removing (UR) activity.</text>
</comment>
<comment type="domain">
    <text evidence="1">Has four distinct domains: an N-terminal nucleotidyltransferase (NT) domain responsible for UTase activity, a central HD domain that encodes UR activity, and two C-terminal ACT domains that seem to have a role in glutamine sensing.</text>
</comment>
<comment type="similarity">
    <text evidence="1">Belongs to the GlnD family.</text>
</comment>
<name>GLND_BURM9</name>
<reference key="1">
    <citation type="journal article" date="2010" name="Genome Biol. Evol.">
        <title>Continuing evolution of Burkholderia mallei through genome reduction and large-scale rearrangements.</title>
        <authorList>
            <person name="Losada L."/>
            <person name="Ronning C.M."/>
            <person name="DeShazer D."/>
            <person name="Woods D."/>
            <person name="Fedorova N."/>
            <person name="Kim H.S."/>
            <person name="Shabalina S.A."/>
            <person name="Pearson T.R."/>
            <person name="Brinkac L."/>
            <person name="Tan P."/>
            <person name="Nandi T."/>
            <person name="Crabtree J."/>
            <person name="Badger J."/>
            <person name="Beckstrom-Sternberg S."/>
            <person name="Saqib M."/>
            <person name="Schutzer S.E."/>
            <person name="Keim P."/>
            <person name="Nierman W.C."/>
        </authorList>
    </citation>
    <scope>NUCLEOTIDE SEQUENCE [LARGE SCALE GENOMIC DNA]</scope>
    <source>
        <strain>NCTC 10229</strain>
    </source>
</reference>
<gene>
    <name evidence="1" type="primary">glnD</name>
    <name type="ordered locus">BMA10229_A3252</name>
</gene>